<keyword id="KW-0002">3D-structure</keyword>
<keyword id="KW-0007">Acetylation</keyword>
<keyword id="KW-0009">Actin-binding</keyword>
<keyword id="KW-0130">Cell adhesion</keyword>
<keyword id="KW-0965">Cell junction</keyword>
<keyword id="KW-1003">Cell membrane</keyword>
<keyword id="KW-0966">Cell projection</keyword>
<keyword id="KW-0963">Cytoplasm</keyword>
<keyword id="KW-0206">Cytoskeleton</keyword>
<keyword id="KW-0903">Direct protein sequencing</keyword>
<keyword id="KW-0449">Lipoprotein</keyword>
<keyword id="KW-0472">Membrane</keyword>
<keyword id="KW-0564">Palmitate</keyword>
<keyword id="KW-0597">Phosphoprotein</keyword>
<keyword id="KW-1185">Reference proteome</keyword>
<keyword id="KW-0677">Repeat</keyword>
<gene>
    <name type="primary">Vcl</name>
</gene>
<organism>
    <name type="scientific">Mus musculus</name>
    <name type="common">Mouse</name>
    <dbReference type="NCBI Taxonomy" id="10090"/>
    <lineage>
        <taxon>Eukaryota</taxon>
        <taxon>Metazoa</taxon>
        <taxon>Chordata</taxon>
        <taxon>Craniata</taxon>
        <taxon>Vertebrata</taxon>
        <taxon>Euteleostomi</taxon>
        <taxon>Mammalia</taxon>
        <taxon>Eutheria</taxon>
        <taxon>Euarchontoglires</taxon>
        <taxon>Glires</taxon>
        <taxon>Rodentia</taxon>
        <taxon>Myomorpha</taxon>
        <taxon>Muroidea</taxon>
        <taxon>Muridae</taxon>
        <taxon>Murinae</taxon>
        <taxon>Mus</taxon>
        <taxon>Mus</taxon>
    </lineage>
</organism>
<sequence length="1066" mass="116717">MPVFHTRTIESILEPVAQQISHLVIMHEEGEVDGKAIPDLTAPVAAVQAAVSNLVRVGKETVQTTEDQILKRDMPPAFIKVENACTKLVQAAQMLQSDPYSVPARDYLIDGSRGILSGTSDLLLTFDEAEVRKIIRVCKGILEYLTVAEVVETMEDLVTYTKNLGPGMTKMAKMIDERQQELTHQEHRVMLVNSMNTVKELLPVLISAMKIFVTTKNSKNQGIEEALKNRNFTVEKMSAEINEIIRVLQLTSWDEDAWASKDTEAMKRALASIDSKLNQAKGWLRDPNASPGDAGEQAIRQILDEAGKVGELCAGKERREILGTCKMLGQMTDQVADLRARGQGASPVAMQKAQQVSQGLDVLTAKVENAARKLEAMTNSKQSIAKKIDAAQNWLADPNGGPEGEEQIRGALAEARKIAELCDDPKERDDILRSLGEIAALTSKLGDLRRQGKGDSPEARALAKQVATALQNLQTKTNRAVANSRPAKAAVHLEGKIEQAQRWIDNPTVDDRGVGQAAIRGLVAEGHRLANVMMGPYRQDLLAKCDRVDQLTAQLADLAARGEGESPQARALASQLQDSLKDLKAQMQEAMTQEVSDVFSDTTTPIKLLAVAATAPPDAPNREEVFDERAANFENHSGRLGATAEKAAAVGTANKSTVEGIQASVKTARELTPQVISAARILLRNPGNQAAYEHFETMKNQWIDNVEKMTGLVDEAIDTKSLLDASEEAIKKDLDKCKVAMANIQPQMLVAGATSIARRANRILLVAKREVENSEDPKFREAVKAASDELSKTISPMVMDAKAVAGNISDPGLQKSFLDSGYRILGAVAKVREAFQPQEPDFPPPPPDLEQLRLTDELAPPKPPLPEGEVPPPRPPPPEEKDEEFPEQKAGEVINQPMMMAARQLHDEARKWSSKGNDIIAAAKRMALLMAEMSRLVRGGSGTKRALIQCAKDIAKASDEVTRLAKEVAKQCTDKRIRTNLLQVCERIPTISTQLKILSTVKATMLGRTNISDEESEQATEMLVHNAQNLMQSVKETVREAEAASIKIRTDAGFTLRWVRKTPWYQ</sequence>
<evidence type="ECO:0000250" key="1">
    <source>
        <dbReference type="UniProtKB" id="P12003"/>
    </source>
</evidence>
<evidence type="ECO:0000250" key="2">
    <source>
        <dbReference type="UniProtKB" id="P18206"/>
    </source>
</evidence>
<evidence type="ECO:0000250" key="3">
    <source>
        <dbReference type="UniProtKB" id="P85972"/>
    </source>
</evidence>
<evidence type="ECO:0000255" key="4"/>
<evidence type="ECO:0000256" key="5">
    <source>
        <dbReference type="SAM" id="MobiDB-lite"/>
    </source>
</evidence>
<evidence type="ECO:0000269" key="6">
    <source>
    </source>
</evidence>
<evidence type="ECO:0000269" key="7">
    <source>
    </source>
</evidence>
<evidence type="ECO:0000269" key="8">
    <source>
    </source>
</evidence>
<evidence type="ECO:0000269" key="9">
    <source>
    </source>
</evidence>
<evidence type="ECO:0000269" key="10">
    <source>
    </source>
</evidence>
<evidence type="ECO:0000269" key="11">
    <source>
    </source>
</evidence>
<evidence type="ECO:0000269" key="12">
    <source>
    </source>
</evidence>
<evidence type="ECO:0000305" key="13"/>
<evidence type="ECO:0007744" key="14">
    <source>
    </source>
</evidence>
<evidence type="ECO:0007744" key="15">
    <source>
    </source>
</evidence>
<evidence type="ECO:0007744" key="16">
    <source>
    </source>
</evidence>
<evidence type="ECO:0007829" key="17">
    <source>
        <dbReference type="PDB" id="5Y04"/>
    </source>
</evidence>
<reference key="1">
    <citation type="journal article" date="1995" name="Proc. Natl. Acad. Sci. U.S.A.">
        <title>Targeted disruption of vinculin genes in F9 and embryonic stem cells changes cell morphology, adhesion, and locomotion.</title>
        <authorList>
            <person name="Coll J.-L."/>
            <person name="Ben-Ze'ev A."/>
            <person name="Ezzell R.M."/>
            <person name="Rodriguez Fernandez J.L."/>
            <person name="Baribault H."/>
            <person name="Oshima R.G."/>
            <person name="Adamson E.D."/>
        </authorList>
    </citation>
    <scope>NUCLEOTIDE SEQUENCE [GENOMIC DNA]</scope>
    <scope>FUNCTION</scope>
    <source>
        <strain>129/SvJ</strain>
        <tissue>Embryo</tissue>
    </source>
</reference>
<reference key="2">
    <citation type="journal article" date="1997" name="FEBS Lett.">
        <title>Vinculin gene is non-essential in Drosophila melanogaster.</title>
        <authorList>
            <person name="Alatortsev V.E."/>
            <person name="Kramerova I.A."/>
            <person name="Frolov M.V."/>
            <person name="Lavrov S.A."/>
            <person name="Westphal E.D."/>
        </authorList>
    </citation>
    <scope>NUCLEOTIDE SEQUENCE [MRNA]</scope>
</reference>
<reference key="3">
    <citation type="journal article" date="2005" name="Science">
        <title>The transcriptional landscape of the mammalian genome.</title>
        <authorList>
            <person name="Carninci P."/>
            <person name="Kasukawa T."/>
            <person name="Katayama S."/>
            <person name="Gough J."/>
            <person name="Frith M.C."/>
            <person name="Maeda N."/>
            <person name="Oyama R."/>
            <person name="Ravasi T."/>
            <person name="Lenhard B."/>
            <person name="Wells C."/>
            <person name="Kodzius R."/>
            <person name="Shimokawa K."/>
            <person name="Bajic V.B."/>
            <person name="Brenner S.E."/>
            <person name="Batalov S."/>
            <person name="Forrest A.R."/>
            <person name="Zavolan M."/>
            <person name="Davis M.J."/>
            <person name="Wilming L.G."/>
            <person name="Aidinis V."/>
            <person name="Allen J.E."/>
            <person name="Ambesi-Impiombato A."/>
            <person name="Apweiler R."/>
            <person name="Aturaliya R.N."/>
            <person name="Bailey T.L."/>
            <person name="Bansal M."/>
            <person name="Baxter L."/>
            <person name="Beisel K.W."/>
            <person name="Bersano T."/>
            <person name="Bono H."/>
            <person name="Chalk A.M."/>
            <person name="Chiu K.P."/>
            <person name="Choudhary V."/>
            <person name="Christoffels A."/>
            <person name="Clutterbuck D.R."/>
            <person name="Crowe M.L."/>
            <person name="Dalla E."/>
            <person name="Dalrymple B.P."/>
            <person name="de Bono B."/>
            <person name="Della Gatta G."/>
            <person name="di Bernardo D."/>
            <person name="Down T."/>
            <person name="Engstrom P."/>
            <person name="Fagiolini M."/>
            <person name="Faulkner G."/>
            <person name="Fletcher C.F."/>
            <person name="Fukushima T."/>
            <person name="Furuno M."/>
            <person name="Futaki S."/>
            <person name="Gariboldi M."/>
            <person name="Georgii-Hemming P."/>
            <person name="Gingeras T.R."/>
            <person name="Gojobori T."/>
            <person name="Green R.E."/>
            <person name="Gustincich S."/>
            <person name="Harbers M."/>
            <person name="Hayashi Y."/>
            <person name="Hensch T.K."/>
            <person name="Hirokawa N."/>
            <person name="Hill D."/>
            <person name="Huminiecki L."/>
            <person name="Iacono M."/>
            <person name="Ikeo K."/>
            <person name="Iwama A."/>
            <person name="Ishikawa T."/>
            <person name="Jakt M."/>
            <person name="Kanapin A."/>
            <person name="Katoh M."/>
            <person name="Kawasawa Y."/>
            <person name="Kelso J."/>
            <person name="Kitamura H."/>
            <person name="Kitano H."/>
            <person name="Kollias G."/>
            <person name="Krishnan S.P."/>
            <person name="Kruger A."/>
            <person name="Kummerfeld S.K."/>
            <person name="Kurochkin I.V."/>
            <person name="Lareau L.F."/>
            <person name="Lazarevic D."/>
            <person name="Lipovich L."/>
            <person name="Liu J."/>
            <person name="Liuni S."/>
            <person name="McWilliam S."/>
            <person name="Madan Babu M."/>
            <person name="Madera M."/>
            <person name="Marchionni L."/>
            <person name="Matsuda H."/>
            <person name="Matsuzawa S."/>
            <person name="Miki H."/>
            <person name="Mignone F."/>
            <person name="Miyake S."/>
            <person name="Morris K."/>
            <person name="Mottagui-Tabar S."/>
            <person name="Mulder N."/>
            <person name="Nakano N."/>
            <person name="Nakauchi H."/>
            <person name="Ng P."/>
            <person name="Nilsson R."/>
            <person name="Nishiguchi S."/>
            <person name="Nishikawa S."/>
            <person name="Nori F."/>
            <person name="Ohara O."/>
            <person name="Okazaki Y."/>
            <person name="Orlando V."/>
            <person name="Pang K.C."/>
            <person name="Pavan W.J."/>
            <person name="Pavesi G."/>
            <person name="Pesole G."/>
            <person name="Petrovsky N."/>
            <person name="Piazza S."/>
            <person name="Reed J."/>
            <person name="Reid J.F."/>
            <person name="Ring B.Z."/>
            <person name="Ringwald M."/>
            <person name="Rost B."/>
            <person name="Ruan Y."/>
            <person name="Salzberg S.L."/>
            <person name="Sandelin A."/>
            <person name="Schneider C."/>
            <person name="Schoenbach C."/>
            <person name="Sekiguchi K."/>
            <person name="Semple C.A."/>
            <person name="Seno S."/>
            <person name="Sessa L."/>
            <person name="Sheng Y."/>
            <person name="Shibata Y."/>
            <person name="Shimada H."/>
            <person name="Shimada K."/>
            <person name="Silva D."/>
            <person name="Sinclair B."/>
            <person name="Sperling S."/>
            <person name="Stupka E."/>
            <person name="Sugiura K."/>
            <person name="Sultana R."/>
            <person name="Takenaka Y."/>
            <person name="Taki K."/>
            <person name="Tammoja K."/>
            <person name="Tan S.L."/>
            <person name="Tang S."/>
            <person name="Taylor M.S."/>
            <person name="Tegner J."/>
            <person name="Teichmann S.A."/>
            <person name="Ueda H.R."/>
            <person name="van Nimwegen E."/>
            <person name="Verardo R."/>
            <person name="Wei C.L."/>
            <person name="Yagi K."/>
            <person name="Yamanishi H."/>
            <person name="Zabarovsky E."/>
            <person name="Zhu S."/>
            <person name="Zimmer A."/>
            <person name="Hide W."/>
            <person name="Bult C."/>
            <person name="Grimmond S.M."/>
            <person name="Teasdale R.D."/>
            <person name="Liu E.T."/>
            <person name="Brusic V."/>
            <person name="Quackenbush J."/>
            <person name="Wahlestedt C."/>
            <person name="Mattick J.S."/>
            <person name="Hume D.A."/>
            <person name="Kai C."/>
            <person name="Sasaki D."/>
            <person name="Tomaru Y."/>
            <person name="Fukuda S."/>
            <person name="Kanamori-Katayama M."/>
            <person name="Suzuki M."/>
            <person name="Aoki J."/>
            <person name="Arakawa T."/>
            <person name="Iida J."/>
            <person name="Imamura K."/>
            <person name="Itoh M."/>
            <person name="Kato T."/>
            <person name="Kawaji H."/>
            <person name="Kawagashira N."/>
            <person name="Kawashima T."/>
            <person name="Kojima M."/>
            <person name="Kondo S."/>
            <person name="Konno H."/>
            <person name="Nakano K."/>
            <person name="Ninomiya N."/>
            <person name="Nishio T."/>
            <person name="Okada M."/>
            <person name="Plessy C."/>
            <person name="Shibata K."/>
            <person name="Shiraki T."/>
            <person name="Suzuki S."/>
            <person name="Tagami M."/>
            <person name="Waki K."/>
            <person name="Watahiki A."/>
            <person name="Okamura-Oho Y."/>
            <person name="Suzuki H."/>
            <person name="Kawai J."/>
            <person name="Hayashizaki Y."/>
        </authorList>
    </citation>
    <scope>NUCLEOTIDE SEQUENCE [LARGE SCALE MRNA]</scope>
    <source>
        <strain>C57BL/6J</strain>
        <tissue>Embryo</tissue>
        <tissue>Forelimb</tissue>
    </source>
</reference>
<reference key="4">
    <citation type="journal article" date="2004" name="Genome Res.">
        <title>The status, quality, and expansion of the NIH full-length cDNA project: the Mammalian Gene Collection (MGC).</title>
        <authorList>
            <consortium name="The MGC Project Team"/>
        </authorList>
    </citation>
    <scope>NUCLEOTIDE SEQUENCE [LARGE SCALE MRNA]</scope>
</reference>
<reference key="5">
    <citation type="submission" date="2009-01" db="UniProtKB">
        <authorList>
            <person name="Lubec G."/>
            <person name="Sunyer B."/>
            <person name="Chen W.-Q."/>
        </authorList>
    </citation>
    <scope>PROTEIN SEQUENCE OF 286-300; 656-666 AND 916-924</scope>
    <scope>IDENTIFICATION BY MASS SPECTROMETRY</scope>
    <source>
        <strain>OF1</strain>
        <tissue>Hippocampus</tissue>
    </source>
</reference>
<reference key="6">
    <citation type="journal article" date="1999" name="J. Cell Biol.">
        <title>Ponsin/SH3P12: an l-afadin- and vinculin-binding protein localized at cell-cell and cell-matrix adherens junctions.</title>
        <authorList>
            <person name="Mandai K."/>
            <person name="Nakanishi H."/>
            <person name="Satoh A."/>
            <person name="Takahashi K."/>
            <person name="Satoh K."/>
            <person name="Nishioka H."/>
            <person name="Mizoguchi A."/>
            <person name="Takai Y."/>
        </authorList>
    </citation>
    <scope>INTERACTION WITH SORBS1</scope>
</reference>
<reference key="7">
    <citation type="journal article" date="2007" name="Proc. Natl. Acad. Sci. U.S.A.">
        <title>Large-scale phosphorylation analysis of mouse liver.</title>
        <authorList>
            <person name="Villen J."/>
            <person name="Beausoleil S.A."/>
            <person name="Gerber S.A."/>
            <person name="Gygi S.P."/>
        </authorList>
    </citation>
    <scope>PHOSPHORYLATION [LARGE SCALE ANALYSIS] AT SER-290</scope>
    <scope>IDENTIFICATION BY MASS SPECTROMETRY [LARGE SCALE ANALYSIS]</scope>
    <source>
        <tissue>Liver</tissue>
    </source>
</reference>
<reference key="8">
    <citation type="journal article" date="2008" name="J. Proteome Res.">
        <title>Specific phosphopeptide enrichment with immobilized titanium ion affinity chromatography adsorbent for phosphoproteome analysis.</title>
        <authorList>
            <person name="Zhou H."/>
            <person name="Ye M."/>
            <person name="Dong J."/>
            <person name="Han G."/>
            <person name="Jiang X."/>
            <person name="Wu R."/>
            <person name="Zou H."/>
        </authorList>
    </citation>
    <scope>IDENTIFICATION BY MASS SPECTROMETRY [LARGE SCALE ANALYSIS]</scope>
    <source>
        <tissue>Liver</tissue>
    </source>
</reference>
<reference key="9">
    <citation type="journal article" date="2009" name="Mol. Cell. Proteomics">
        <title>Large scale localization of protein phosphorylation by use of electron capture dissociation mass spectrometry.</title>
        <authorList>
            <person name="Sweet S.M."/>
            <person name="Bailey C.M."/>
            <person name="Cunningham D.L."/>
            <person name="Heath J.K."/>
            <person name="Cooper H.J."/>
        </authorList>
    </citation>
    <scope>PHOSPHORYLATION [LARGE SCALE ANALYSIS] AT SER-290 AND SER-721</scope>
    <scope>IDENTIFICATION BY MASS SPECTROMETRY [LARGE SCALE ANALYSIS]</scope>
    <source>
        <tissue>Embryonic fibroblast</tissue>
    </source>
</reference>
<reference key="10">
    <citation type="journal article" date="2010" name="Biochem. Biophys. Res. Commun.">
        <title>Vinculin's C-terminal region facilitates phospholipid membrane insertion.</title>
        <authorList>
            <person name="Wirth V.F."/>
            <person name="List F."/>
            <person name="Diez G."/>
            <person name="Goldmann W.H."/>
        </authorList>
    </citation>
    <scope>REGION INVOLVED IN PHOSPHOLIPID MEMBRANE INSERTION</scope>
</reference>
<reference key="11">
    <citation type="journal article" date="2010" name="Cell">
        <title>A tissue-specific atlas of mouse protein phosphorylation and expression.</title>
        <authorList>
            <person name="Huttlin E.L."/>
            <person name="Jedrychowski M.P."/>
            <person name="Elias J.E."/>
            <person name="Goswami T."/>
            <person name="Rad R."/>
            <person name="Beausoleil S.A."/>
            <person name="Villen J."/>
            <person name="Haas W."/>
            <person name="Sowa M.E."/>
            <person name="Gygi S.P."/>
        </authorList>
    </citation>
    <scope>PHOSPHORYLATION [LARGE SCALE ANALYSIS] AT SER-260; SER-290; SER-346; SER-579; SER-600; SER-721; SER-809 AND TYR-822</scope>
    <scope>IDENTIFICATION BY MASS SPECTROMETRY [LARGE SCALE ANALYSIS]</scope>
    <source>
        <tissue>Brain</tissue>
        <tissue>Brown adipose tissue</tissue>
        <tissue>Heart</tissue>
        <tissue>Kidney</tissue>
        <tissue>Liver</tissue>
        <tissue>Lung</tissue>
        <tissue>Pancreas</tissue>
        <tissue>Spleen</tissue>
        <tissue>Testis</tissue>
    </source>
</reference>
<reference key="12">
    <citation type="journal article" date="2010" name="J. Biol. Chem.">
        <title>Central region of talin has a unique fold that binds vinculin and actin.</title>
        <authorList>
            <person name="Gingras A.R."/>
            <person name="Bate N."/>
            <person name="Goult B.T."/>
            <person name="Patel B."/>
            <person name="Kopp P.M."/>
            <person name="Emsley J."/>
            <person name="Barsukov I.L."/>
            <person name="Roberts G.C."/>
            <person name="Critchley D.R."/>
        </authorList>
    </citation>
    <scope>INTERACTION WITH TLN1</scope>
</reference>
<reference key="13">
    <citation type="journal article" date="2015" name="J. Biol. Chem.">
        <title>Deletion of MLIP (muscle-enriched A-type lamin-interacting protein) leads to cardiac hyperactivation of Akt/mammalian target of rapamycin (mTOR) and impaired cardiac adaptation.</title>
        <authorList>
            <person name="Cattin M.E."/>
            <person name="Wang J."/>
            <person name="Weldrick J.J."/>
            <person name="Roeske C.L."/>
            <person name="Mak E."/>
            <person name="Thorn S.L."/>
            <person name="DaSilva J.N."/>
            <person name="Wang Y."/>
            <person name="Lusis A.J."/>
            <person name="Burgon P.G."/>
        </authorList>
    </citation>
    <scope>SUBCELLULAR LOCATION</scope>
</reference>
<reference key="14">
    <citation type="journal article" date="2016" name="J. Cell Sci.">
        <title>Tensin 3 is a new partner of Dock5 that controls osteoclast podosome organization and activity.</title>
        <authorList>
            <person name="Touaitahuata H."/>
            <person name="Morel A."/>
            <person name="Urbach S."/>
            <person name="Mateos-Langerak J."/>
            <person name="de Rossi S."/>
            <person name="Blangy A."/>
        </authorList>
    </citation>
    <scope>SUBCELLULAR LOCATION</scope>
</reference>
<reference key="15">
    <citation type="journal article" date="2023" name="Proc. Natl. Acad. Sci. U.S.A.">
        <title>A human FLII gene variant alters sarcomeric actin thin filament length and predisposes to cardiomyopathy.</title>
        <authorList>
            <person name="Kuwabara Y."/>
            <person name="York A.J."/>
            <person name="Lin S.C."/>
            <person name="Sargent M.A."/>
            <person name="Grimes K.M."/>
            <person name="Pirruccello J.P."/>
            <person name="Molkentin J.D."/>
        </authorList>
    </citation>
    <scope>INTERACTION WITH FLII</scope>
</reference>
<dbReference type="EMBL" id="L13300">
    <property type="protein sequence ID" value="AAA40557.1"/>
    <property type="molecule type" value="Genomic_DNA"/>
</dbReference>
<dbReference type="EMBL" id="L13299">
    <property type="protein sequence ID" value="AAA40557.1"/>
    <property type="status" value="JOINED"/>
    <property type="molecule type" value="Genomic_DNA"/>
</dbReference>
<dbReference type="EMBL" id="L18880">
    <property type="protein sequence ID" value="AAB96843.1"/>
    <property type="molecule type" value="mRNA"/>
</dbReference>
<dbReference type="EMBL" id="AK035184">
    <property type="protein sequence ID" value="BAC28973.1"/>
    <property type="molecule type" value="mRNA"/>
</dbReference>
<dbReference type="EMBL" id="AK077850">
    <property type="protein sequence ID" value="BAC37033.1"/>
    <property type="molecule type" value="mRNA"/>
</dbReference>
<dbReference type="EMBL" id="BC008520">
    <property type="protein sequence ID" value="AAH08520.1"/>
    <property type="molecule type" value="mRNA"/>
</dbReference>
<dbReference type="EMBL" id="BC008554">
    <property type="protein sequence ID" value="AAH08554.1"/>
    <property type="molecule type" value="mRNA"/>
</dbReference>
<dbReference type="CCDS" id="CCDS26860.1"/>
<dbReference type="PIR" id="A60965">
    <property type="entry name" value="A60965"/>
</dbReference>
<dbReference type="PIR" id="T10108">
    <property type="entry name" value="T10108"/>
</dbReference>
<dbReference type="RefSeq" id="NP_033528.3">
    <property type="nucleotide sequence ID" value="NM_009502.4"/>
</dbReference>
<dbReference type="PDB" id="5Y04">
    <property type="method" value="X-ray"/>
    <property type="resolution" value="2.85 A"/>
    <property type="chains" value="A=1-250"/>
</dbReference>
<dbReference type="PDBsum" id="5Y04"/>
<dbReference type="BMRB" id="Q64727"/>
<dbReference type="SMR" id="Q64727"/>
<dbReference type="BioGRID" id="204506">
    <property type="interactions" value="49"/>
</dbReference>
<dbReference type="CORUM" id="Q64727"/>
<dbReference type="FunCoup" id="Q64727">
    <property type="interactions" value="1517"/>
</dbReference>
<dbReference type="IntAct" id="Q64727">
    <property type="interactions" value="16"/>
</dbReference>
<dbReference type="MINT" id="Q64727"/>
<dbReference type="STRING" id="10090.ENSMUSP00000022369"/>
<dbReference type="GlyGen" id="Q64727">
    <property type="glycosylation" value="4 sites, 2 N-linked glycans (3 sites), 1 O-linked glycan (1 site)"/>
</dbReference>
<dbReference type="iPTMnet" id="Q64727"/>
<dbReference type="MetOSite" id="Q64727"/>
<dbReference type="PhosphoSitePlus" id="Q64727"/>
<dbReference type="SwissPalm" id="Q64727"/>
<dbReference type="REPRODUCTION-2DPAGE" id="Q64727"/>
<dbReference type="CPTAC" id="non-CPTAC-3755"/>
<dbReference type="jPOST" id="Q64727"/>
<dbReference type="PaxDb" id="10090-ENSMUSP00000022369"/>
<dbReference type="PeptideAtlas" id="Q64727"/>
<dbReference type="ProteomicsDB" id="298282"/>
<dbReference type="Pumba" id="Q64727"/>
<dbReference type="Antibodypedia" id="884">
    <property type="antibodies" value="958 antibodies from 46 providers"/>
</dbReference>
<dbReference type="DNASU" id="22330"/>
<dbReference type="Ensembl" id="ENSMUST00000022369.9">
    <property type="protein sequence ID" value="ENSMUSP00000022369.8"/>
    <property type="gene ID" value="ENSMUSG00000021823.11"/>
</dbReference>
<dbReference type="GeneID" id="22330"/>
<dbReference type="KEGG" id="mmu:22330"/>
<dbReference type="UCSC" id="uc007skz.1">
    <property type="organism name" value="mouse"/>
</dbReference>
<dbReference type="AGR" id="MGI:98927"/>
<dbReference type="CTD" id="7414"/>
<dbReference type="MGI" id="MGI:98927">
    <property type="gene designation" value="Vcl"/>
</dbReference>
<dbReference type="VEuPathDB" id="HostDB:ENSMUSG00000021823"/>
<dbReference type="eggNOG" id="KOG3681">
    <property type="taxonomic scope" value="Eukaryota"/>
</dbReference>
<dbReference type="GeneTree" id="ENSGT01030000234543"/>
<dbReference type="HOGENOM" id="CLU_012338_0_0_1"/>
<dbReference type="InParanoid" id="Q64727"/>
<dbReference type="OMA" id="ANNLCEL"/>
<dbReference type="OrthoDB" id="29742at2759"/>
<dbReference type="PhylomeDB" id="Q64727"/>
<dbReference type="TreeFam" id="TF313686"/>
<dbReference type="Reactome" id="R-MMU-114608">
    <property type="pathway name" value="Platelet degranulation"/>
</dbReference>
<dbReference type="Reactome" id="R-MMU-445355">
    <property type="pathway name" value="Smooth Muscle Contraction"/>
</dbReference>
<dbReference type="Reactome" id="R-MMU-5674135">
    <property type="pathway name" value="MAP2K and MAPK activation"/>
</dbReference>
<dbReference type="Reactome" id="R-MMU-6798695">
    <property type="pathway name" value="Neutrophil degranulation"/>
</dbReference>
<dbReference type="Reactome" id="R-MMU-9856530">
    <property type="pathway name" value="High laminar flow shear stress activates signaling by PIEZO1 and PECAM1:CDH5:KDR in endothelial cells"/>
</dbReference>
<dbReference type="Reactome" id="R-MMU-9860927">
    <property type="pathway name" value="Turbulent (oscillatory, disturbed) flow shear stress activates signaling by PIEZO1 and integrins in endothelial cells"/>
</dbReference>
<dbReference type="BioGRID-ORCS" id="22330">
    <property type="hits" value="4 hits in 77 CRISPR screens"/>
</dbReference>
<dbReference type="ChiTaRS" id="Vcl">
    <property type="organism name" value="mouse"/>
</dbReference>
<dbReference type="PRO" id="PR:Q64727"/>
<dbReference type="Proteomes" id="UP000000589">
    <property type="component" value="Chromosome 14"/>
</dbReference>
<dbReference type="RNAct" id="Q64727">
    <property type="molecule type" value="protein"/>
</dbReference>
<dbReference type="Bgee" id="ENSMUSG00000021823">
    <property type="expression patterns" value="Expressed in aorta tunica media and 259 other cell types or tissues"/>
</dbReference>
<dbReference type="ExpressionAtlas" id="Q64727">
    <property type="expression patterns" value="baseline and differential"/>
</dbReference>
<dbReference type="GO" id="GO:0015629">
    <property type="term" value="C:actin cytoskeleton"/>
    <property type="evidence" value="ECO:0000314"/>
    <property type="project" value="MGI"/>
</dbReference>
<dbReference type="GO" id="GO:0005912">
    <property type="term" value="C:adherens junction"/>
    <property type="evidence" value="ECO:0000314"/>
    <property type="project" value="MGI"/>
</dbReference>
<dbReference type="GO" id="GO:0005903">
    <property type="term" value="C:brush border"/>
    <property type="evidence" value="ECO:0000250"/>
    <property type="project" value="AgBase"/>
</dbReference>
<dbReference type="GO" id="GO:0042995">
    <property type="term" value="C:cell projection"/>
    <property type="evidence" value="ECO:0007669"/>
    <property type="project" value="UniProtKB-KW"/>
</dbReference>
<dbReference type="GO" id="GO:0005911">
    <property type="term" value="C:cell-cell junction"/>
    <property type="evidence" value="ECO:0000314"/>
    <property type="project" value="MGI"/>
</dbReference>
<dbReference type="GO" id="GO:0043034">
    <property type="term" value="C:costamere"/>
    <property type="evidence" value="ECO:0000314"/>
    <property type="project" value="MGI"/>
</dbReference>
<dbReference type="GO" id="GO:0005737">
    <property type="term" value="C:cytoplasm"/>
    <property type="evidence" value="ECO:0000314"/>
    <property type="project" value="UniProtKB"/>
</dbReference>
<dbReference type="GO" id="GO:0005916">
    <property type="term" value="C:fascia adherens"/>
    <property type="evidence" value="ECO:0000314"/>
    <property type="project" value="MGI"/>
</dbReference>
<dbReference type="GO" id="GO:0005925">
    <property type="term" value="C:focal adhesion"/>
    <property type="evidence" value="ECO:0000314"/>
    <property type="project" value="UniProtKB"/>
</dbReference>
<dbReference type="GO" id="GO:0090637">
    <property type="term" value="C:inner dense plaque of desmosome"/>
    <property type="evidence" value="ECO:0000250"/>
    <property type="project" value="AgBase"/>
</dbReference>
<dbReference type="GO" id="GO:0090636">
    <property type="term" value="C:outer dense plaque of desmosome"/>
    <property type="evidence" value="ECO:0000250"/>
    <property type="project" value="AgBase"/>
</dbReference>
<dbReference type="GO" id="GO:0005886">
    <property type="term" value="C:plasma membrane"/>
    <property type="evidence" value="ECO:0000314"/>
    <property type="project" value="MGI"/>
</dbReference>
<dbReference type="GO" id="GO:0002102">
    <property type="term" value="C:podosome"/>
    <property type="evidence" value="ECO:0000314"/>
    <property type="project" value="MGI"/>
</dbReference>
<dbReference type="GO" id="GO:0061826">
    <property type="term" value="C:podosome ring"/>
    <property type="evidence" value="ECO:0000314"/>
    <property type="project" value="MGI"/>
</dbReference>
<dbReference type="GO" id="GO:0032991">
    <property type="term" value="C:protein-containing complex"/>
    <property type="evidence" value="ECO:0007669"/>
    <property type="project" value="Ensembl"/>
</dbReference>
<dbReference type="GO" id="GO:0042383">
    <property type="term" value="C:sarcolemma"/>
    <property type="evidence" value="ECO:0000314"/>
    <property type="project" value="UniProtKB"/>
</dbReference>
<dbReference type="GO" id="GO:1990357">
    <property type="term" value="C:terminal web"/>
    <property type="evidence" value="ECO:0000250"/>
    <property type="project" value="AgBase"/>
</dbReference>
<dbReference type="GO" id="GO:0005915">
    <property type="term" value="C:zonula adherens"/>
    <property type="evidence" value="ECO:0000250"/>
    <property type="project" value="AgBase"/>
</dbReference>
<dbReference type="GO" id="GO:0051015">
    <property type="term" value="F:actin filament binding"/>
    <property type="evidence" value="ECO:0007669"/>
    <property type="project" value="InterPro"/>
</dbReference>
<dbReference type="GO" id="GO:0045294">
    <property type="term" value="F:alpha-catenin binding"/>
    <property type="evidence" value="ECO:0007669"/>
    <property type="project" value="Ensembl"/>
</dbReference>
<dbReference type="GO" id="GO:0002162">
    <property type="term" value="F:dystroglycan binding"/>
    <property type="evidence" value="ECO:0007669"/>
    <property type="project" value="Ensembl"/>
</dbReference>
<dbReference type="GO" id="GO:0005198">
    <property type="term" value="F:structural molecule activity"/>
    <property type="evidence" value="ECO:0007669"/>
    <property type="project" value="InterPro"/>
</dbReference>
<dbReference type="GO" id="GO:0031625">
    <property type="term" value="F:ubiquitin protein ligase binding"/>
    <property type="evidence" value="ECO:0007669"/>
    <property type="project" value="Ensembl"/>
</dbReference>
<dbReference type="GO" id="GO:0034333">
    <property type="term" value="P:adherens junction assembly"/>
    <property type="evidence" value="ECO:0007669"/>
    <property type="project" value="Ensembl"/>
</dbReference>
<dbReference type="GO" id="GO:0043297">
    <property type="term" value="P:apical junction assembly"/>
    <property type="evidence" value="ECO:0007669"/>
    <property type="project" value="Ensembl"/>
</dbReference>
<dbReference type="GO" id="GO:0048675">
    <property type="term" value="P:axon extension"/>
    <property type="evidence" value="ECO:0000316"/>
    <property type="project" value="MGI"/>
</dbReference>
<dbReference type="GO" id="GO:0007155">
    <property type="term" value="P:cell adhesion"/>
    <property type="evidence" value="ECO:0000314"/>
    <property type="project" value="MGI"/>
</dbReference>
<dbReference type="GO" id="GO:0090136">
    <property type="term" value="P:epithelial cell-cell adhesion"/>
    <property type="evidence" value="ECO:0007669"/>
    <property type="project" value="Ensembl"/>
</dbReference>
<dbReference type="GO" id="GO:0030032">
    <property type="term" value="P:lamellipodium assembly"/>
    <property type="evidence" value="ECO:0000314"/>
    <property type="project" value="MGI"/>
</dbReference>
<dbReference type="GO" id="GO:0002009">
    <property type="term" value="P:morphogenesis of an epithelium"/>
    <property type="evidence" value="ECO:0007669"/>
    <property type="project" value="Ensembl"/>
</dbReference>
<dbReference type="GO" id="GO:0034394">
    <property type="term" value="P:protein localization to cell surface"/>
    <property type="evidence" value="ECO:0007669"/>
    <property type="project" value="Ensembl"/>
</dbReference>
<dbReference type="GO" id="GO:0030334">
    <property type="term" value="P:regulation of cell migration"/>
    <property type="evidence" value="ECO:0000314"/>
    <property type="project" value="MGI"/>
</dbReference>
<dbReference type="GO" id="GO:1903140">
    <property type="term" value="P:regulation of establishment of endothelial barrier"/>
    <property type="evidence" value="ECO:0007669"/>
    <property type="project" value="Ensembl"/>
</dbReference>
<dbReference type="GO" id="GO:0051893">
    <property type="term" value="P:regulation of focal adhesion assembly"/>
    <property type="evidence" value="ECO:0007669"/>
    <property type="project" value="Ensembl"/>
</dbReference>
<dbReference type="GO" id="GO:1904702">
    <property type="term" value="P:regulation of protein localization to adherens junction"/>
    <property type="evidence" value="ECO:0007669"/>
    <property type="project" value="Ensembl"/>
</dbReference>
<dbReference type="FunFam" id="1.20.120.230:FF:000041">
    <property type="entry name" value="Vinculin"/>
    <property type="match status" value="1"/>
</dbReference>
<dbReference type="FunFam" id="1.20.120.230:FF:000010">
    <property type="entry name" value="Vinculin a"/>
    <property type="match status" value="1"/>
</dbReference>
<dbReference type="FunFam" id="1.20.120.810:FF:000001">
    <property type="entry name" value="Vinculin a"/>
    <property type="match status" value="1"/>
</dbReference>
<dbReference type="FunFam" id="1.20.120.230:FF:000013">
    <property type="entry name" value="Vinculin b"/>
    <property type="match status" value="1"/>
</dbReference>
<dbReference type="FunFam" id="1.20.120.810:FF:000002">
    <property type="entry name" value="Vinculin b"/>
    <property type="match status" value="1"/>
</dbReference>
<dbReference type="FunFam" id="1.20.120.810:FF:000003">
    <property type="entry name" value="Vinculin b"/>
    <property type="match status" value="1"/>
</dbReference>
<dbReference type="Gene3D" id="1.20.120.230">
    <property type="entry name" value="Alpha-catenin/vinculin-like"/>
    <property type="match status" value="2"/>
</dbReference>
<dbReference type="Gene3D" id="1.20.120.810">
    <property type="entry name" value="Vinculin, Vh2 four-helix bundle"/>
    <property type="match status" value="3"/>
</dbReference>
<dbReference type="InterPro" id="IPR036723">
    <property type="entry name" value="Alpha-catenin/vinculin-like_sf"/>
</dbReference>
<dbReference type="InterPro" id="IPR017997">
    <property type="entry name" value="Vinculin"/>
</dbReference>
<dbReference type="InterPro" id="IPR006077">
    <property type="entry name" value="Vinculin/catenin"/>
</dbReference>
<dbReference type="InterPro" id="IPR000633">
    <property type="entry name" value="Vinculin_CS"/>
</dbReference>
<dbReference type="PANTHER" id="PTHR46180">
    <property type="entry name" value="VINCULIN"/>
    <property type="match status" value="1"/>
</dbReference>
<dbReference type="Pfam" id="PF01044">
    <property type="entry name" value="Vinculin"/>
    <property type="match status" value="1"/>
</dbReference>
<dbReference type="PRINTS" id="PR00806">
    <property type="entry name" value="VINCULIN"/>
</dbReference>
<dbReference type="SUPFAM" id="SSF47220">
    <property type="entry name" value="alpha-catenin/vinculin-like"/>
    <property type="match status" value="6"/>
</dbReference>
<dbReference type="PROSITE" id="PS00663">
    <property type="entry name" value="VINCULIN_1"/>
    <property type="match status" value="1"/>
</dbReference>
<dbReference type="PROSITE" id="PS00664">
    <property type="entry name" value="VINCULIN_2"/>
    <property type="match status" value="3"/>
</dbReference>
<proteinExistence type="evidence at protein level"/>
<protein>
    <recommendedName>
        <fullName>Vinculin</fullName>
    </recommendedName>
    <alternativeName>
        <fullName>Metavinculin</fullName>
    </alternativeName>
</protein>
<name>VINC_MOUSE</name>
<comment type="function">
    <text evidence="2 12">Actin filament (F-actin)-binding protein involved in cell-matrix adhesion and cell-cell adhesion. Regulates cell-surface E-cadherin expression and potentiates mechanosensing by the E-cadherin complex. May also play important roles in cell morphology and locomotion (By similarity).</text>
</comment>
<comment type="subunit">
    <text evidence="1 2 6 8 11">Exhibits self-association properties. Part of a complex composed of THSD1, PTK2/FAK1, TLN1 and VCL (By similarity). Interacts with APBB1IP, NRAP and TLN1. Interacts with SYNM. Interacts with CTNNB1 and this interaction is necessary for its localization to the cell-cell junctions and for its function in regulating cell surface expression of E-cadherin (By similarity). Interacts with SORBS1 (PubMed:10085297). Interacts with SYNM (By similarity). Interacts with CTNNA1 (By similarity). Binds to ACTN4; this interaction triggers conformational changes (By similarity). Interacts with FLII (PubMed:37126682).</text>
</comment>
<comment type="interaction">
    <interactant intactId="EBI-432047">
        <id>Q64727</id>
    </interactant>
    <interactant intactId="EBI-641821">
        <id>Q61210</id>
        <label>Arhgef1</label>
    </interactant>
    <organismsDiffer>false</organismsDiffer>
    <experiments>3</experiments>
</comment>
<comment type="interaction">
    <interactant intactId="EBI-432047">
        <id>Q64727</id>
    </interactant>
    <interactant intactId="EBI-983394">
        <id>Q8VI36</id>
        <label>Pxn</label>
    </interactant>
    <organismsDiffer>false</organismsDiffer>
    <experiments>3</experiments>
</comment>
<comment type="interaction">
    <interactant intactId="EBI-432047">
        <id>Q64727</id>
    </interactant>
    <interactant intactId="EBI-79508">
        <id>P39447</id>
        <label>Tjp1</label>
    </interactant>
    <organismsDiffer>false</organismsDiffer>
    <experiments>8</experiments>
</comment>
<comment type="interaction">
    <interactant intactId="EBI-432047">
        <id>Q64727</id>
    </interactant>
    <interactant intactId="EBI-1039593">
        <id>P26039</id>
        <label>Tln1</label>
    </interactant>
    <organismsDiffer>false</organismsDiffer>
    <experiments>2</experiments>
</comment>
<comment type="interaction">
    <interactant intactId="EBI-432047">
        <id>Q64727</id>
    </interactant>
    <interactant intactId="EBI-2896280">
        <id>P49024</id>
        <label>PXN</label>
    </interactant>
    <organismsDiffer>true</organismsDiffer>
    <experiments>4</experiments>
</comment>
<comment type="subcellular location">
    <subcellularLocation>
        <location evidence="1">Cell membrane</location>
        <topology evidence="1">Peripheral membrane protein</topology>
        <orientation evidence="1">Cytoplasmic side</orientation>
    </subcellularLocation>
    <subcellularLocation>
        <location evidence="1">Cell junction</location>
        <location evidence="1">Adherens junction</location>
    </subcellularLocation>
    <subcellularLocation>
        <location evidence="1">Cell junction</location>
        <location evidence="1">Focal adhesion</location>
    </subcellularLocation>
    <subcellularLocation>
        <location evidence="3">Cytoplasm</location>
        <location evidence="3">Cytoskeleton</location>
    </subcellularLocation>
    <subcellularLocation>
        <location evidence="9">Cell membrane</location>
        <location evidence="9">Sarcolemma</location>
        <topology evidence="9">Peripheral membrane protein</topology>
        <orientation evidence="9">Cytoplasmic side</orientation>
    </subcellularLocation>
    <subcellularLocation>
        <location evidence="10">Cell projection</location>
        <location evidence="10">Podosome</location>
    </subcellularLocation>
    <text evidence="1">Recruitment to cell-cell junctions occurs in a myosin II-dependent manner. Interaction with CTNNB1 is necessary for its localization to the cell-cell junctions.</text>
</comment>
<comment type="domain">
    <text evidence="2">Exists in at least two conformations. When in the closed, 'inactive' conformation, extensive interactions between the head and tail domains prevent detectable binding to most of its ligands. It takes on an 'active' conformation after cooperative and simultaneous binding of two different ligands. This activation involves displacement of the head-tail interactions and leads to a significant accumulation of ternary complexes. The active form then binds a number of proteins that have both signaling and structural roles that are essential for cell adhesion.</text>
</comment>
<comment type="domain">
    <text evidence="2">The N-terminal globular head (Vh) comprises of subdomains D1-D4. The C-terminal tail (Vt) binds F-actin and cross-links actin filaments into bundles. An intramolecular interaction between Vh and Vt masks the F-actin-binding domain located in Vt. The binding of talin and alpha-actinin to the D1 subdomain of vinculin induces a helical bundle conversion of this subdomain, leading to the disruption of the intramolecular interaction and the exposure of the cryptic F-actin-binding domain of Vt. Vt inhibits actin filament barbed end elongation without affecting the critical concentration of actin assembly.</text>
</comment>
<comment type="PTM">
    <text evidence="1">Phosphorylated; on serines, threonines and tyrosines. Phosphorylation on Tyr-1065 in activated platelets affects head-tail interactions and cell spreading but has no effect on actin binding nor on localization to focal adhesion plaques (By similarity).</text>
</comment>
<comment type="PTM">
    <text evidence="1">Acetylated; mainly by myristic acid but also by a small amount of palmitic acid.</text>
</comment>
<comment type="similarity">
    <text evidence="13">Belongs to the vinculin/alpha-catenin family.</text>
</comment>
<feature type="chain" id="PRO_0000064253" description="Vinculin">
    <location>
        <begin position="1"/>
        <end position="1066"/>
    </location>
</feature>
<feature type="repeat" description="1" evidence="4">
    <location>
        <begin position="259"/>
        <end position="369"/>
    </location>
</feature>
<feature type="repeat" description="2" evidence="4">
    <location>
        <begin position="370"/>
        <end position="479"/>
    </location>
</feature>
<feature type="repeat" description="3" evidence="4">
    <location>
        <begin position="480"/>
        <end position="589"/>
    </location>
</feature>
<feature type="region of interest" description="N-terminal globular head" evidence="2">
    <location>
        <begin position="1"/>
        <end position="835"/>
    </location>
</feature>
<feature type="region of interest" description="Talin-interaction" evidence="1">
    <location>
        <begin position="168"/>
        <end position="208"/>
    </location>
</feature>
<feature type="region of interest" description="3 X 112 AA tandem repeats" evidence="4">
    <location>
        <begin position="259"/>
        <end position="589"/>
    </location>
</feature>
<feature type="region of interest" description="Interaction with ACTN4" evidence="2">
    <location>
        <begin position="741"/>
        <end position="764"/>
    </location>
</feature>
<feature type="region of interest" description="Linker (Pro-rich)" evidence="2">
    <location>
        <begin position="836"/>
        <end position="878"/>
    </location>
</feature>
<feature type="region of interest" description="Disordered" evidence="5">
    <location>
        <begin position="857"/>
        <end position="887"/>
    </location>
</feature>
<feature type="region of interest" description="C-terminal tail" evidence="2">
    <location>
        <begin position="879"/>
        <end position="1066"/>
    </location>
</feature>
<feature type="region of interest" description="Facilitates phospholipid membrane insertion" evidence="7">
    <location>
        <begin position="935"/>
        <end position="978"/>
    </location>
</feature>
<feature type="region of interest" description="Facilitates phospholipid membrane insertion" evidence="7">
    <location>
        <begin position="1052"/>
        <end position="1066"/>
    </location>
</feature>
<feature type="compositionally biased region" description="Pro residues" evidence="5">
    <location>
        <begin position="860"/>
        <end position="876"/>
    </location>
</feature>
<feature type="modified residue" description="Phosphoserine" evidence="3">
    <location>
        <position position="97"/>
    </location>
</feature>
<feature type="modified residue" description="N6-acetyllysine" evidence="2">
    <location>
        <position position="173"/>
    </location>
</feature>
<feature type="modified residue" description="Phosphoserine" evidence="16">
    <location>
        <position position="260"/>
    </location>
</feature>
<feature type="modified residue" description="Phosphoserine" evidence="3">
    <location>
        <position position="272"/>
    </location>
</feature>
<feature type="modified residue" description="Phosphoserine" evidence="2">
    <location>
        <position position="275"/>
    </location>
</feature>
<feature type="modified residue" description="Phosphoserine" evidence="14 15 16">
    <location>
        <position position="290"/>
    </location>
</feature>
<feature type="modified residue" description="Phosphoserine" evidence="16">
    <location>
        <position position="346"/>
    </location>
</feature>
<feature type="modified residue" description="Phosphoserine" evidence="2">
    <location>
        <position position="434"/>
    </location>
</feature>
<feature type="modified residue" description="N6-acetyllysine" evidence="2">
    <location>
        <position position="496"/>
    </location>
</feature>
<feature type="modified residue" description="Phosphotyrosine" evidence="13">
    <location>
        <position position="537"/>
    </location>
</feature>
<feature type="modified residue" description="Phosphoserine" evidence="3">
    <location>
        <position position="574"/>
    </location>
</feature>
<feature type="modified residue" description="Phosphoserine" evidence="16">
    <location>
        <position position="579"/>
    </location>
</feature>
<feature type="modified residue" description="Phosphoserine" evidence="16">
    <location>
        <position position="600"/>
    </location>
</feature>
<feature type="modified residue" description="Phosphothreonine" evidence="2">
    <location>
        <position position="604"/>
    </location>
</feature>
<feature type="modified residue" description="Phosphothreonine" evidence="2">
    <location>
        <position position="672"/>
    </location>
</feature>
<feature type="modified residue" description="Phosphoserine" evidence="15 16">
    <location>
        <position position="721"/>
    </location>
</feature>
<feature type="modified residue" description="Phosphoserine" evidence="2">
    <location>
        <position position="795"/>
    </location>
</feature>
<feature type="modified residue" description="Phosphoserine" evidence="16">
    <location>
        <position position="809"/>
    </location>
</feature>
<feature type="modified residue" description="Phosphotyrosine" evidence="16">
    <location>
        <position position="822"/>
    </location>
</feature>
<feature type="modified residue" description="Phosphotyrosine; by SRC-type Tyr-kinases" evidence="2">
    <location>
        <position position="1065"/>
    </location>
</feature>
<feature type="sequence conflict" description="In Ref. 1; AAB96843." evidence="13" ref="1">
    <original>V</original>
    <variation>E</variation>
    <location>
        <position position="16"/>
    </location>
</feature>
<feature type="sequence conflict" description="In Ref. 1; AAB96843." evidence="13" ref="1">
    <original>T</original>
    <variation>S</variation>
    <location>
        <position position="215"/>
    </location>
</feature>
<feature type="sequence conflict" description="In Ref. 1; AAB96843." evidence="13" ref="1">
    <original>L</original>
    <variation>V</variation>
    <location>
        <position position="363"/>
    </location>
</feature>
<feature type="sequence conflict" description="In Ref. 3; BAC37033." evidence="13" ref="3">
    <original>Q</original>
    <variation>K</variation>
    <location>
        <position position="499"/>
    </location>
</feature>
<feature type="sequence conflict" description="In Ref. 1; AAB96843." evidence="13" ref="1">
    <original>Q</original>
    <variation>R</variation>
    <location>
        <position position="501"/>
    </location>
</feature>
<feature type="sequence conflict" description="In Ref. 3; BAC37033." evidence="13" ref="3">
    <original>M</original>
    <variation>K</variation>
    <location>
        <position position="799"/>
    </location>
</feature>
<feature type="sequence conflict" description="In Ref. 1; AAB96843." evidence="13" ref="1">
    <original>G</original>
    <variation>D</variation>
    <location>
        <position position="812"/>
    </location>
</feature>
<feature type="sequence conflict" description="In Ref. 3; BAC37033." evidence="13" ref="3">
    <original>A</original>
    <variation>T</variation>
    <location>
        <position position="1044"/>
    </location>
</feature>
<feature type="strand" evidence="17">
    <location>
        <begin position="3"/>
        <end position="6"/>
    </location>
</feature>
<feature type="helix" evidence="17">
    <location>
        <begin position="7"/>
        <end position="29"/>
    </location>
</feature>
<feature type="turn" evidence="17">
    <location>
        <begin position="30"/>
        <end position="34"/>
    </location>
</feature>
<feature type="helix" evidence="17">
    <location>
        <begin position="41"/>
        <end position="64"/>
    </location>
</feature>
<feature type="helix" evidence="17">
    <location>
        <begin position="68"/>
        <end position="97"/>
    </location>
</feature>
<feature type="helix" evidence="17">
    <location>
        <begin position="104"/>
        <end position="146"/>
    </location>
</feature>
<feature type="helix" evidence="17">
    <location>
        <begin position="159"/>
        <end position="179"/>
    </location>
</feature>
<feature type="helix" evidence="17">
    <location>
        <begin position="185"/>
        <end position="210"/>
    </location>
</feature>
<feature type="helix" evidence="17">
    <location>
        <begin position="225"/>
        <end position="249"/>
    </location>
</feature>
<accession>Q64727</accession>
<accession>Q8BP32</accession>
<accession>Q8BS46</accession>
<accession>Q922C5</accession>
<accession>Q922D9</accession>